<accession>P51005</accession>
<dbReference type="EC" id="2.7.7.19"/>
<dbReference type="EMBL" id="U19974">
    <property type="protein sequence ID" value="AAC59746.1"/>
    <property type="molecule type" value="mRNA"/>
</dbReference>
<dbReference type="SMR" id="P51005"/>
<dbReference type="AGR" id="Xenbase:XB-GENE-944355"/>
<dbReference type="Xenbase" id="XB-GENE-944355">
    <property type="gene designation" value="papola.L"/>
</dbReference>
<dbReference type="Proteomes" id="UP000186698">
    <property type="component" value="Unplaced"/>
</dbReference>
<dbReference type="GO" id="GO:0005634">
    <property type="term" value="C:nucleus"/>
    <property type="evidence" value="ECO:0000318"/>
    <property type="project" value="GO_Central"/>
</dbReference>
<dbReference type="GO" id="GO:0005524">
    <property type="term" value="F:ATP binding"/>
    <property type="evidence" value="ECO:0007669"/>
    <property type="project" value="UniProtKB-KW"/>
</dbReference>
<dbReference type="GO" id="GO:1990817">
    <property type="term" value="F:poly(A) RNA polymerase activity"/>
    <property type="evidence" value="ECO:0000318"/>
    <property type="project" value="GO_Central"/>
</dbReference>
<dbReference type="GO" id="GO:0003723">
    <property type="term" value="F:RNA binding"/>
    <property type="evidence" value="ECO:0007669"/>
    <property type="project" value="UniProtKB-KW"/>
</dbReference>
<dbReference type="GO" id="GO:0006397">
    <property type="term" value="P:mRNA processing"/>
    <property type="evidence" value="ECO:0007669"/>
    <property type="project" value="UniProtKB-KW"/>
</dbReference>
<dbReference type="GO" id="GO:0031123">
    <property type="term" value="P:RNA 3'-end processing"/>
    <property type="evidence" value="ECO:0007669"/>
    <property type="project" value="InterPro"/>
</dbReference>
<dbReference type="FunFam" id="1.10.1410.10:FF:000021">
    <property type="entry name" value="poly(A) polymerase alpha isoform X7"/>
    <property type="match status" value="1"/>
</dbReference>
<dbReference type="FunFam" id="3.30.70.590:FF:000001">
    <property type="entry name" value="Putative poly(A) polymerase gamma"/>
    <property type="match status" value="1"/>
</dbReference>
<dbReference type="Gene3D" id="1.10.1410.10">
    <property type="match status" value="1"/>
</dbReference>
<dbReference type="Gene3D" id="3.30.70.590">
    <property type="entry name" value="Poly(A) polymerase predicted RNA binding domain"/>
    <property type="match status" value="1"/>
</dbReference>
<dbReference type="InterPro" id="IPR011068">
    <property type="entry name" value="NuclTrfase_I-like_C"/>
</dbReference>
<dbReference type="InterPro" id="IPR007012">
    <property type="entry name" value="PolA_pol_cen_dom"/>
</dbReference>
<dbReference type="InterPro" id="IPR007010">
    <property type="entry name" value="PolA_pol_RNA-bd_dom"/>
</dbReference>
<dbReference type="InterPro" id="IPR014492">
    <property type="entry name" value="PolyA_polymerase"/>
</dbReference>
<dbReference type="PANTHER" id="PTHR10682">
    <property type="entry name" value="POLY A POLYMERASE"/>
    <property type="match status" value="1"/>
</dbReference>
<dbReference type="PANTHER" id="PTHR10682:SF9">
    <property type="entry name" value="POLY(A) POLYMERASE ALPHA"/>
    <property type="match status" value="1"/>
</dbReference>
<dbReference type="Pfam" id="PF04928">
    <property type="entry name" value="PAP_central"/>
    <property type="match status" value="1"/>
</dbReference>
<dbReference type="Pfam" id="PF04926">
    <property type="entry name" value="PAP_RNA-bind"/>
    <property type="match status" value="2"/>
</dbReference>
<dbReference type="PIRSF" id="PIRSF018425">
    <property type="entry name" value="PolyA_polymerase"/>
    <property type="match status" value="1"/>
</dbReference>
<dbReference type="SUPFAM" id="SSF55003">
    <property type="entry name" value="PAP/Archaeal CCA-adding enzyme, C-terminal domain"/>
    <property type="match status" value="1"/>
</dbReference>
<dbReference type="SUPFAM" id="SSF81631">
    <property type="entry name" value="PAP/OAS1 substrate-binding domain"/>
    <property type="match status" value="1"/>
</dbReference>
<name>PAPO2_XENLA</name>
<protein>
    <recommendedName>
        <fullName>Poly(A) polymerase alpha-B</fullName>
        <shortName>PAP-alpha-B</shortName>
        <ecNumber>2.7.7.19</ecNumber>
    </recommendedName>
    <alternativeName>
        <fullName>Polynucleotide adenylyltransferase alpha-B</fullName>
    </alternativeName>
</protein>
<keyword id="KW-0067">ATP-binding</keyword>
<keyword id="KW-0507">mRNA processing</keyword>
<keyword id="KW-0547">Nucleotide-binding</keyword>
<keyword id="KW-0539">Nucleus</keyword>
<keyword id="KW-1185">Reference proteome</keyword>
<keyword id="KW-0694">RNA-binding</keyword>
<keyword id="KW-0808">Transferase</keyword>
<proteinExistence type="evidence at transcript level"/>
<sequence>MLVARTCQLYPNAIASTLVHKFFLVFSKWEWPNPVLLKQPEECNLNLPVWDPRVNPSDRYHLMPIITPAYPQQNSTYNVSVSTRAVMVEEFKQGLAITDEILLVKAEWSKLFDAPNFFQKYKHYILLLASAPTEKQRLEWVGLVESKIRILVGSLEKNEFITLAHVNPQSFPSPSENSEKEEFRTMWVIGLVFKKMENSENLSVDLTYDIQSFTDTVYRQAINSKMFETEIKIAAMHVKRKQLHQLLPSHVLPKKKKHSVEGVKLVSLNDSSIDLSVDSDNSMSVPSPTNATRTSPLNSTGLSQGNSPATPVSLSVTNTQATDVMVPQNNSTENSGGSLNESIPETATHPAFSSTPRPLVTRVVSSMPLVNQVQKPVTNTVTKMPSPVAGVKRTSSPTNEESPKKTKTEEDENDSSNSTEVDEQNKLEPEELKEVHSEEKSSSPVPGALPSSQRSSSTDLSDISVLPATPIPVIKNSIKLRLNR</sequence>
<organism>
    <name type="scientific">Xenopus laevis</name>
    <name type="common">African clawed frog</name>
    <dbReference type="NCBI Taxonomy" id="8355"/>
    <lineage>
        <taxon>Eukaryota</taxon>
        <taxon>Metazoa</taxon>
        <taxon>Chordata</taxon>
        <taxon>Craniata</taxon>
        <taxon>Vertebrata</taxon>
        <taxon>Euteleostomi</taxon>
        <taxon>Amphibia</taxon>
        <taxon>Batrachia</taxon>
        <taxon>Anura</taxon>
        <taxon>Pipoidea</taxon>
        <taxon>Pipidae</taxon>
        <taxon>Xenopodinae</taxon>
        <taxon>Xenopus</taxon>
        <taxon>Xenopus</taxon>
    </lineage>
</organism>
<reference key="1">
    <citation type="journal article" date="1995" name="RNA">
        <title>Poly(A) polymerases in the nucleus and cytoplasm of frog oocytes: dynamic changes during oocyte maturation and early development.</title>
        <authorList>
            <person name="Ballantyne S."/>
            <person name="Bilger A."/>
            <person name="Astrom J."/>
            <person name="Virtanen A."/>
            <person name="Wickens M."/>
        </authorList>
    </citation>
    <scope>NUCLEOTIDE SEQUENCE [MRNA]</scope>
    <source>
        <tissue>Ovary</tissue>
    </source>
</reference>
<comment type="function">
    <text>Polymerase that creates the 3'-poly(A) tail of mRNA's. May acquire specificity through interaction with a cleavage and polyadenylation factor (CPSF).</text>
</comment>
<comment type="catalytic activity">
    <reaction>
        <text>RNA(n) + ATP = RNA(n)-3'-adenine ribonucleotide + diphosphate</text>
        <dbReference type="Rhea" id="RHEA:11332"/>
        <dbReference type="Rhea" id="RHEA-COMP:14527"/>
        <dbReference type="Rhea" id="RHEA-COMP:17347"/>
        <dbReference type="ChEBI" id="CHEBI:30616"/>
        <dbReference type="ChEBI" id="CHEBI:33019"/>
        <dbReference type="ChEBI" id="CHEBI:140395"/>
        <dbReference type="ChEBI" id="CHEBI:173115"/>
        <dbReference type="EC" id="2.7.7.19"/>
    </reaction>
</comment>
<comment type="subunit">
    <text evidence="1">Monomer.</text>
</comment>
<comment type="subcellular location">
    <subcellularLocation>
        <location>Nucleus</location>
    </subcellularLocation>
</comment>
<comment type="similarity">
    <text evidence="3">Belongs to the poly(A) polymerase family.</text>
</comment>
<gene>
    <name type="primary">papola-b</name>
</gene>
<feature type="chain" id="PRO_0000051615" description="Poly(A) polymerase alpha-B">
    <location>
        <begin position="1"/>
        <end position="484"/>
    </location>
</feature>
<feature type="region of interest" description="Disordered" evidence="2">
    <location>
        <begin position="276"/>
        <end position="314"/>
    </location>
</feature>
<feature type="region of interest" description="Disordered" evidence="2">
    <location>
        <begin position="326"/>
        <end position="356"/>
    </location>
</feature>
<feature type="region of interest" description="Disordered" evidence="2">
    <location>
        <begin position="375"/>
        <end position="484"/>
    </location>
</feature>
<feature type="short sequence motif" description="Nuclear localization signal 1" evidence="1">
    <location>
        <begin position="240"/>
        <end position="257"/>
    </location>
</feature>
<feature type="short sequence motif" description="Nuclear localization signal 2" evidence="1">
    <location>
        <begin position="392"/>
        <end position="407"/>
    </location>
</feature>
<feature type="compositionally biased region" description="Basic and acidic residues" evidence="2">
    <location>
        <begin position="423"/>
        <end position="441"/>
    </location>
</feature>
<feature type="compositionally biased region" description="Low complexity" evidence="2">
    <location>
        <begin position="451"/>
        <end position="464"/>
    </location>
</feature>
<evidence type="ECO:0000250" key="1"/>
<evidence type="ECO:0000256" key="2">
    <source>
        <dbReference type="SAM" id="MobiDB-lite"/>
    </source>
</evidence>
<evidence type="ECO:0000305" key="3"/>